<keyword id="KW-0001">2Fe-2S</keyword>
<keyword id="KW-0004">4Fe-4S</keyword>
<keyword id="KW-0963">Cytoplasm</keyword>
<keyword id="KW-0408">Iron</keyword>
<keyword id="KW-0411">Iron-sulfur</keyword>
<keyword id="KW-0479">Metal-binding</keyword>
<keyword id="KW-0496">Mitochondrion</keyword>
<keyword id="KW-1185">Reference proteome</keyword>
<evidence type="ECO:0000255" key="1">
    <source>
        <dbReference type="HAMAP-Rule" id="MF_03115"/>
    </source>
</evidence>
<evidence type="ECO:0000256" key="2">
    <source>
        <dbReference type="SAM" id="MobiDB-lite"/>
    </source>
</evidence>
<name>DRE2_MYCMD</name>
<proteinExistence type="inferred from homology"/>
<organism>
    <name type="scientific">Mycosarcoma maydis</name>
    <name type="common">Corn smut fungus</name>
    <name type="synonym">Ustilago maydis</name>
    <dbReference type="NCBI Taxonomy" id="5270"/>
    <lineage>
        <taxon>Eukaryota</taxon>
        <taxon>Fungi</taxon>
        <taxon>Dikarya</taxon>
        <taxon>Basidiomycota</taxon>
        <taxon>Ustilaginomycotina</taxon>
        <taxon>Ustilaginomycetes</taxon>
        <taxon>Ustilaginales</taxon>
        <taxon>Ustilaginaceae</taxon>
        <taxon>Mycosarcoma</taxon>
    </lineage>
</organism>
<sequence>MTPPVATDAAFSHSSNGVVLSTSVDPSGTVLVIGSMTSAQSGAYQKAVEAYSGRQVEMHMVDRLTDGATSLSANTYPLAHLAVNYAEAASPVLLSSLHSALQPKAKLIVEAAELVDASTAQKVKAELIIAGFTDIQVDVATGSVSASKPATASSSFSIGSSSGSSSALPLRRKLGSGASANAKKSLWATQPASANDLIDEASLLRDADFVATTAVKRPDCDVGAGQGKKKKACKGCTCGLRELQEEEKRTANTNIVQLDTDDMDMPNADTPATTKRTEVIETIIGKDGKPKTIKRIQVDTKGATSSCGSCFLGDAFRCSSCPYLGLPAFEPGQKVEIPVGMDDDI</sequence>
<feature type="chain" id="PRO_0000392410" description="Fe-S cluster assembly protein DRE2">
    <location>
        <begin position="1"/>
        <end position="345"/>
    </location>
</feature>
<feature type="region of interest" description="N-terminal SAM-like domain" evidence="1">
    <location>
        <begin position="11"/>
        <end position="166"/>
    </location>
</feature>
<feature type="region of interest" description="Disordered" evidence="2">
    <location>
        <begin position="147"/>
        <end position="166"/>
    </location>
</feature>
<feature type="region of interest" description="Linker" evidence="1">
    <location>
        <begin position="167"/>
        <end position="210"/>
    </location>
</feature>
<feature type="region of interest" description="Fe-S binding site A" evidence="1">
    <location>
        <begin position="220"/>
        <end position="238"/>
    </location>
</feature>
<feature type="region of interest" description="Fe-S binding site B" evidence="1">
    <location>
        <begin position="307"/>
        <end position="321"/>
    </location>
</feature>
<feature type="short sequence motif" description="Cx2C motif 1" evidence="1">
    <location>
        <begin position="307"/>
        <end position="310"/>
    </location>
</feature>
<feature type="short sequence motif" description="Cx2C motif 2" evidence="1">
    <location>
        <begin position="318"/>
        <end position="321"/>
    </location>
</feature>
<feature type="compositionally biased region" description="Low complexity" evidence="2">
    <location>
        <begin position="153"/>
        <end position="166"/>
    </location>
</feature>
<feature type="binding site" evidence="1">
    <location>
        <position position="220"/>
    </location>
    <ligand>
        <name>[2Fe-2S] cluster</name>
        <dbReference type="ChEBI" id="CHEBI:190135"/>
    </ligand>
</feature>
<feature type="binding site" evidence="1">
    <location>
        <position position="233"/>
    </location>
    <ligand>
        <name>[2Fe-2S] cluster</name>
        <dbReference type="ChEBI" id="CHEBI:190135"/>
    </ligand>
</feature>
<feature type="binding site" evidence="1">
    <location>
        <position position="236"/>
    </location>
    <ligand>
        <name>[2Fe-2S] cluster</name>
        <dbReference type="ChEBI" id="CHEBI:190135"/>
    </ligand>
</feature>
<feature type="binding site" evidence="1">
    <location>
        <position position="238"/>
    </location>
    <ligand>
        <name>[2Fe-2S] cluster</name>
        <dbReference type="ChEBI" id="CHEBI:190135"/>
    </ligand>
</feature>
<feature type="binding site" evidence="1">
    <location>
        <position position="307"/>
    </location>
    <ligand>
        <name>[4Fe-4S] cluster</name>
        <dbReference type="ChEBI" id="CHEBI:49883"/>
    </ligand>
</feature>
<feature type="binding site" evidence="1">
    <location>
        <position position="310"/>
    </location>
    <ligand>
        <name>[4Fe-4S] cluster</name>
        <dbReference type="ChEBI" id="CHEBI:49883"/>
    </ligand>
</feature>
<feature type="binding site" evidence="1">
    <location>
        <position position="318"/>
    </location>
    <ligand>
        <name>[4Fe-4S] cluster</name>
        <dbReference type="ChEBI" id="CHEBI:49883"/>
    </ligand>
</feature>
<feature type="binding site" evidence="1">
    <location>
        <position position="321"/>
    </location>
    <ligand>
        <name>[4Fe-4S] cluster</name>
        <dbReference type="ChEBI" id="CHEBI:49883"/>
    </ligand>
</feature>
<reference key="1">
    <citation type="journal article" date="2006" name="Nature">
        <title>Insights from the genome of the biotrophic fungal plant pathogen Ustilago maydis.</title>
        <authorList>
            <person name="Kaemper J."/>
            <person name="Kahmann R."/>
            <person name="Boelker M."/>
            <person name="Ma L.-J."/>
            <person name="Brefort T."/>
            <person name="Saville B.J."/>
            <person name="Banuett F."/>
            <person name="Kronstad J.W."/>
            <person name="Gold S.E."/>
            <person name="Mueller O."/>
            <person name="Perlin M.H."/>
            <person name="Woesten H.A.B."/>
            <person name="de Vries R."/>
            <person name="Ruiz-Herrera J."/>
            <person name="Reynaga-Pena C.G."/>
            <person name="Snetselaar K."/>
            <person name="McCann M."/>
            <person name="Perez-Martin J."/>
            <person name="Feldbruegge M."/>
            <person name="Basse C.W."/>
            <person name="Steinberg G."/>
            <person name="Ibeas J.I."/>
            <person name="Holloman W."/>
            <person name="Guzman P."/>
            <person name="Farman M.L."/>
            <person name="Stajich J.E."/>
            <person name="Sentandreu R."/>
            <person name="Gonzalez-Prieto J.M."/>
            <person name="Kennell J.C."/>
            <person name="Molina L."/>
            <person name="Schirawski J."/>
            <person name="Mendoza-Mendoza A."/>
            <person name="Greilinger D."/>
            <person name="Muench K."/>
            <person name="Roessel N."/>
            <person name="Scherer M."/>
            <person name="Vranes M."/>
            <person name="Ladendorf O."/>
            <person name="Vincon V."/>
            <person name="Fuchs U."/>
            <person name="Sandrock B."/>
            <person name="Meng S."/>
            <person name="Ho E.C.H."/>
            <person name="Cahill M.J."/>
            <person name="Boyce K.J."/>
            <person name="Klose J."/>
            <person name="Klosterman S.J."/>
            <person name="Deelstra H.J."/>
            <person name="Ortiz-Castellanos L."/>
            <person name="Li W."/>
            <person name="Sanchez-Alonso P."/>
            <person name="Schreier P.H."/>
            <person name="Haeuser-Hahn I."/>
            <person name="Vaupel M."/>
            <person name="Koopmann E."/>
            <person name="Friedrich G."/>
            <person name="Voss H."/>
            <person name="Schlueter T."/>
            <person name="Margolis J."/>
            <person name="Platt D."/>
            <person name="Swimmer C."/>
            <person name="Gnirke A."/>
            <person name="Chen F."/>
            <person name="Vysotskaia V."/>
            <person name="Mannhaupt G."/>
            <person name="Gueldener U."/>
            <person name="Muensterkoetter M."/>
            <person name="Haase D."/>
            <person name="Oesterheld M."/>
            <person name="Mewes H.-W."/>
            <person name="Mauceli E.W."/>
            <person name="DeCaprio D."/>
            <person name="Wade C.M."/>
            <person name="Butler J."/>
            <person name="Young S.K."/>
            <person name="Jaffe D.B."/>
            <person name="Calvo S.E."/>
            <person name="Nusbaum C."/>
            <person name="Galagan J.E."/>
            <person name="Birren B.W."/>
        </authorList>
    </citation>
    <scope>NUCLEOTIDE SEQUENCE [LARGE SCALE GENOMIC DNA]</scope>
    <source>
        <strain>DSM 14603 / FGSC 9021 / UM521</strain>
    </source>
</reference>
<reference key="2">
    <citation type="submission" date="2014-09" db="EMBL/GenBank/DDBJ databases">
        <authorList>
            <person name="Gueldener U."/>
            <person name="Muensterkoetter M."/>
            <person name="Walter M.C."/>
            <person name="Mannhaupt G."/>
            <person name="Kahmann R."/>
        </authorList>
    </citation>
    <scope>GENOME REANNOTATION</scope>
    <source>
        <strain>DSM 14603 / FGSC 9021 / UM521</strain>
    </source>
</reference>
<gene>
    <name evidence="1" type="primary">DRE2</name>
    <name type="ORF">UMAG_01550</name>
</gene>
<protein>
    <recommendedName>
        <fullName evidence="1">Fe-S cluster assembly protein DRE2</fullName>
    </recommendedName>
    <alternativeName>
        <fullName evidence="1">Anamorsin homolog</fullName>
    </alternativeName>
</protein>
<accession>Q4PEB3</accession>
<accession>A0A0D1E7J7</accession>
<comment type="function">
    <text evidence="1">Component of the cytosolic iron-sulfur (Fe-S) protein assembly (CIA) machinery required for the maturation of extramitochondrial Fe-S proteins. Part of an electron transfer chain functioning in an early step of cytosolic Fe-S biogenesis, facilitating the de novo assembly of a [4Fe-4S] cluster on the scaffold complex CFD1-NBP35. Electrons are transferred to DRE2 from NADPH via the FAD- and FMN-containing protein TAH18. TAH18-DRE2 are also required for the assembly of the diferric tyrosyl radical cofactor of ribonucleotide reductase (RNR), probably by providing electrons for reduction during radical cofactor maturation in the catalytic small subunit RNR2.</text>
</comment>
<comment type="cofactor">
    <cofactor evidence="1">
        <name>[2Fe-2S] cluster</name>
        <dbReference type="ChEBI" id="CHEBI:190135"/>
    </cofactor>
</comment>
<comment type="cofactor">
    <cofactor evidence="1">
        <name>[4Fe-4S] cluster</name>
        <dbReference type="ChEBI" id="CHEBI:49883"/>
    </cofactor>
</comment>
<comment type="subunit">
    <text evidence="1">Monomer. Interacts with TAH18. Interacts with MIA40.</text>
</comment>
<comment type="subcellular location">
    <subcellularLocation>
        <location evidence="1">Cytoplasm</location>
    </subcellularLocation>
    <subcellularLocation>
        <location evidence="1">Mitochondrion intermembrane space</location>
    </subcellularLocation>
</comment>
<comment type="domain">
    <text evidence="1">The C-terminal domain binds 2 Fe-S clusters but is otherwise mostly in an intrinsically disordered conformation.</text>
</comment>
<comment type="domain">
    <text evidence="1">The N-terminal domain has structural similarity with S-adenosyl-L-methionine-dependent methyltransferases, but does not bind S-adenosyl-L-methionine. It is required for correct assembly of the 2 Fe-S clusters.</text>
</comment>
<comment type="domain">
    <text evidence="1">The twin Cx2C motifs are involved in the recognition by the mitochondrial MIA40-ERV1 disulfide relay system. The formation of 2 disulfide bonds in the Cx2C motifs through dithiol/disulfide exchange reactions effectively traps the protein in the mitochondrial intermembrane space.</text>
</comment>
<comment type="similarity">
    <text evidence="1">Belongs to the anamorsin family.</text>
</comment>
<dbReference type="EMBL" id="CM003142">
    <property type="protein sequence ID" value="KIS70380.1"/>
    <property type="molecule type" value="Genomic_DNA"/>
</dbReference>
<dbReference type="RefSeq" id="XP_011387576.1">
    <property type="nucleotide sequence ID" value="XM_011389274.1"/>
</dbReference>
<dbReference type="FunCoup" id="Q4PEB3">
    <property type="interactions" value="311"/>
</dbReference>
<dbReference type="STRING" id="237631.Q4PEB3"/>
<dbReference type="EnsemblFungi" id="KIS70380">
    <property type="protein sequence ID" value="KIS70380"/>
    <property type="gene ID" value="UMAG_01550"/>
</dbReference>
<dbReference type="GeneID" id="23562523"/>
<dbReference type="KEGG" id="uma:UMAG_01550"/>
<dbReference type="VEuPathDB" id="FungiDB:UMAG_01550"/>
<dbReference type="eggNOG" id="KOG4020">
    <property type="taxonomic scope" value="Eukaryota"/>
</dbReference>
<dbReference type="HOGENOM" id="CLU_054098_0_0_1"/>
<dbReference type="InParanoid" id="Q4PEB3"/>
<dbReference type="OMA" id="CEPAVRG"/>
<dbReference type="OrthoDB" id="311633at2759"/>
<dbReference type="Proteomes" id="UP000000561">
    <property type="component" value="Chromosome 3"/>
</dbReference>
<dbReference type="GO" id="GO:0005737">
    <property type="term" value="C:cytoplasm"/>
    <property type="evidence" value="ECO:0000318"/>
    <property type="project" value="GO_Central"/>
</dbReference>
<dbReference type="GO" id="GO:0005758">
    <property type="term" value="C:mitochondrial intermembrane space"/>
    <property type="evidence" value="ECO:0007669"/>
    <property type="project" value="UniProtKB-SubCell"/>
</dbReference>
<dbReference type="GO" id="GO:0051537">
    <property type="term" value="F:2 iron, 2 sulfur cluster binding"/>
    <property type="evidence" value="ECO:0007669"/>
    <property type="project" value="UniProtKB-UniRule"/>
</dbReference>
<dbReference type="GO" id="GO:0051539">
    <property type="term" value="F:4 iron, 4 sulfur cluster binding"/>
    <property type="evidence" value="ECO:0007669"/>
    <property type="project" value="UniProtKB-KW"/>
</dbReference>
<dbReference type="GO" id="GO:0009055">
    <property type="term" value="F:electron transfer activity"/>
    <property type="evidence" value="ECO:0007669"/>
    <property type="project" value="UniProtKB-UniRule"/>
</dbReference>
<dbReference type="GO" id="GO:0046872">
    <property type="term" value="F:metal ion binding"/>
    <property type="evidence" value="ECO:0007669"/>
    <property type="project" value="UniProtKB-KW"/>
</dbReference>
<dbReference type="GO" id="GO:0016226">
    <property type="term" value="P:iron-sulfur cluster assembly"/>
    <property type="evidence" value="ECO:0000318"/>
    <property type="project" value="GO_Central"/>
</dbReference>
<dbReference type="Gene3D" id="3.40.50.150">
    <property type="entry name" value="Vaccinia Virus protein VP39"/>
    <property type="match status" value="1"/>
</dbReference>
<dbReference type="HAMAP" id="MF_03115">
    <property type="entry name" value="Anamorsin"/>
    <property type="match status" value="1"/>
</dbReference>
<dbReference type="InterPro" id="IPR007785">
    <property type="entry name" value="Anamorsin"/>
</dbReference>
<dbReference type="InterPro" id="IPR046408">
    <property type="entry name" value="CIAPIN1"/>
</dbReference>
<dbReference type="InterPro" id="IPR031838">
    <property type="entry name" value="Dre2_N"/>
</dbReference>
<dbReference type="InterPro" id="IPR029063">
    <property type="entry name" value="SAM-dependent_MTases_sf"/>
</dbReference>
<dbReference type="PANTHER" id="PTHR13273">
    <property type="entry name" value="ANAMORSIN"/>
    <property type="match status" value="1"/>
</dbReference>
<dbReference type="PANTHER" id="PTHR13273:SF14">
    <property type="entry name" value="ANAMORSIN"/>
    <property type="match status" value="1"/>
</dbReference>
<dbReference type="Pfam" id="PF05093">
    <property type="entry name" value="CIAPIN1"/>
    <property type="match status" value="1"/>
</dbReference>
<dbReference type="Pfam" id="PF16803">
    <property type="entry name" value="DRE2_N"/>
    <property type="match status" value="1"/>
</dbReference>